<evidence type="ECO:0000255" key="1">
    <source>
        <dbReference type="PROSITE-ProRule" id="PRU01182"/>
    </source>
</evidence>
<evidence type="ECO:0000305" key="2"/>
<protein>
    <recommendedName>
        <fullName>UPF0758 protein Smal_0281</fullName>
    </recommendedName>
</protein>
<accession>B4STE3</accession>
<reference key="1">
    <citation type="submission" date="2008-06" db="EMBL/GenBank/DDBJ databases">
        <title>Complete sequence of Stenotrophomonas maltophilia R551-3.</title>
        <authorList>
            <consortium name="US DOE Joint Genome Institute"/>
            <person name="Lucas S."/>
            <person name="Copeland A."/>
            <person name="Lapidus A."/>
            <person name="Glavina del Rio T."/>
            <person name="Dalin E."/>
            <person name="Tice H."/>
            <person name="Pitluck S."/>
            <person name="Chain P."/>
            <person name="Malfatti S."/>
            <person name="Shin M."/>
            <person name="Vergez L."/>
            <person name="Lang D."/>
            <person name="Schmutz J."/>
            <person name="Larimer F."/>
            <person name="Land M."/>
            <person name="Hauser L."/>
            <person name="Kyrpides N."/>
            <person name="Mikhailova N."/>
            <person name="Taghavi S."/>
            <person name="Monchy S."/>
            <person name="Newman L."/>
            <person name="Vangronsveld J."/>
            <person name="van der Lelie D."/>
            <person name="Richardson P."/>
        </authorList>
    </citation>
    <scope>NUCLEOTIDE SEQUENCE [LARGE SCALE GENOMIC DNA]</scope>
    <source>
        <strain>R551-3</strain>
    </source>
</reference>
<proteinExistence type="inferred from homology"/>
<comment type="similarity">
    <text evidence="2">Belongs to the UPF0758 family.</text>
</comment>
<name>Y281_STRM5</name>
<organism>
    <name type="scientific">Stenotrophomonas maltophilia (strain R551-3)</name>
    <dbReference type="NCBI Taxonomy" id="391008"/>
    <lineage>
        <taxon>Bacteria</taxon>
        <taxon>Pseudomonadati</taxon>
        <taxon>Pseudomonadota</taxon>
        <taxon>Gammaproteobacteria</taxon>
        <taxon>Lysobacterales</taxon>
        <taxon>Lysobacteraceae</taxon>
        <taxon>Stenotrophomonas</taxon>
        <taxon>Stenotrophomonas maltophilia group</taxon>
    </lineage>
</organism>
<feature type="chain" id="PRO_1000089854" description="UPF0758 protein Smal_0281">
    <location>
        <begin position="1"/>
        <end position="234"/>
    </location>
</feature>
<feature type="domain" description="MPN" evidence="1">
    <location>
        <begin position="103"/>
        <end position="225"/>
    </location>
</feature>
<feature type="short sequence motif" description="JAMM motif" evidence="1">
    <location>
        <begin position="174"/>
        <end position="187"/>
    </location>
</feature>
<feature type="binding site" evidence="1">
    <location>
        <position position="174"/>
    </location>
    <ligand>
        <name>Zn(2+)</name>
        <dbReference type="ChEBI" id="CHEBI:29105"/>
        <note>catalytic</note>
    </ligand>
</feature>
<feature type="binding site" evidence="1">
    <location>
        <position position="176"/>
    </location>
    <ligand>
        <name>Zn(2+)</name>
        <dbReference type="ChEBI" id="CHEBI:29105"/>
        <note>catalytic</note>
    </ligand>
</feature>
<feature type="binding site" evidence="1">
    <location>
        <position position="187"/>
    </location>
    <ligand>
        <name>Zn(2+)</name>
        <dbReference type="ChEBI" id="CHEBI:29105"/>
        <note>catalytic</note>
    </ligand>
</feature>
<sequence>MPIHDWPEQERPREKLMARGPTALSDAELLALFLGSGFGGRDAVQTARDLLQAHGPLRVLLDRPARELARLPGLGPARSCTLAAGLELAHRYLAAELEHGEAVGNNPAAVGRYLQHRLRGQAREIFMALFLDNRHRLIACEELFHGTINAAPVYPREVVRRALLHNAAAVILSHNHPSGDPEPSSADTRITDELQQALAMVDVRLLDHFVVGEGRPVSFAERGLLSPPQPRLFG</sequence>
<gene>
    <name type="ordered locus">Smal_0281</name>
</gene>
<dbReference type="EMBL" id="CP001111">
    <property type="protein sequence ID" value="ACF49986.1"/>
    <property type="molecule type" value="Genomic_DNA"/>
</dbReference>
<dbReference type="SMR" id="B4STE3"/>
<dbReference type="STRING" id="391008.Smal_0281"/>
<dbReference type="KEGG" id="smt:Smal_0281"/>
<dbReference type="eggNOG" id="COG2003">
    <property type="taxonomic scope" value="Bacteria"/>
</dbReference>
<dbReference type="HOGENOM" id="CLU_073529_0_2_6"/>
<dbReference type="OrthoDB" id="9804482at2"/>
<dbReference type="Proteomes" id="UP000001867">
    <property type="component" value="Chromosome"/>
</dbReference>
<dbReference type="GO" id="GO:0046872">
    <property type="term" value="F:metal ion binding"/>
    <property type="evidence" value="ECO:0007669"/>
    <property type="project" value="UniProtKB-KW"/>
</dbReference>
<dbReference type="GO" id="GO:0008237">
    <property type="term" value="F:metallopeptidase activity"/>
    <property type="evidence" value="ECO:0007669"/>
    <property type="project" value="UniProtKB-KW"/>
</dbReference>
<dbReference type="GO" id="GO:0006508">
    <property type="term" value="P:proteolysis"/>
    <property type="evidence" value="ECO:0007669"/>
    <property type="project" value="UniProtKB-KW"/>
</dbReference>
<dbReference type="CDD" id="cd08071">
    <property type="entry name" value="MPN_DUF2466"/>
    <property type="match status" value="1"/>
</dbReference>
<dbReference type="Gene3D" id="3.40.140.10">
    <property type="entry name" value="Cytidine Deaminase, domain 2"/>
    <property type="match status" value="1"/>
</dbReference>
<dbReference type="InterPro" id="IPR037518">
    <property type="entry name" value="MPN"/>
</dbReference>
<dbReference type="InterPro" id="IPR025657">
    <property type="entry name" value="RadC_JAB"/>
</dbReference>
<dbReference type="InterPro" id="IPR001405">
    <property type="entry name" value="UPF0758"/>
</dbReference>
<dbReference type="InterPro" id="IPR020891">
    <property type="entry name" value="UPF0758_CS"/>
</dbReference>
<dbReference type="InterPro" id="IPR046778">
    <property type="entry name" value="UPF0758_N"/>
</dbReference>
<dbReference type="NCBIfam" id="NF000642">
    <property type="entry name" value="PRK00024.1"/>
    <property type="match status" value="1"/>
</dbReference>
<dbReference type="NCBIfam" id="TIGR00608">
    <property type="entry name" value="radc"/>
    <property type="match status" value="1"/>
</dbReference>
<dbReference type="PANTHER" id="PTHR30471">
    <property type="entry name" value="DNA REPAIR PROTEIN RADC"/>
    <property type="match status" value="1"/>
</dbReference>
<dbReference type="PANTHER" id="PTHR30471:SF3">
    <property type="entry name" value="UPF0758 PROTEIN YEES-RELATED"/>
    <property type="match status" value="1"/>
</dbReference>
<dbReference type="Pfam" id="PF04002">
    <property type="entry name" value="RadC"/>
    <property type="match status" value="1"/>
</dbReference>
<dbReference type="Pfam" id="PF20582">
    <property type="entry name" value="UPF0758_N"/>
    <property type="match status" value="1"/>
</dbReference>
<dbReference type="PROSITE" id="PS50249">
    <property type="entry name" value="MPN"/>
    <property type="match status" value="1"/>
</dbReference>
<dbReference type="PROSITE" id="PS01302">
    <property type="entry name" value="UPF0758"/>
    <property type="match status" value="1"/>
</dbReference>
<keyword id="KW-0378">Hydrolase</keyword>
<keyword id="KW-0479">Metal-binding</keyword>
<keyword id="KW-0482">Metalloprotease</keyword>
<keyword id="KW-0645">Protease</keyword>
<keyword id="KW-0862">Zinc</keyword>